<reference key="1">
    <citation type="journal article" date="2004" name="Proc. Natl. Acad. Sci. U.S.A.">
        <title>Genome sequence of the enterobacterial phytopathogen Erwinia carotovora subsp. atroseptica and characterization of virulence factors.</title>
        <authorList>
            <person name="Bell K.S."/>
            <person name="Sebaihia M."/>
            <person name="Pritchard L."/>
            <person name="Holden M.T.G."/>
            <person name="Hyman L.J."/>
            <person name="Holeva M.C."/>
            <person name="Thomson N.R."/>
            <person name="Bentley S.D."/>
            <person name="Churcher L.J.C."/>
            <person name="Mungall K."/>
            <person name="Atkin R."/>
            <person name="Bason N."/>
            <person name="Brooks K."/>
            <person name="Chillingworth T."/>
            <person name="Clark K."/>
            <person name="Doggett J."/>
            <person name="Fraser A."/>
            <person name="Hance Z."/>
            <person name="Hauser H."/>
            <person name="Jagels K."/>
            <person name="Moule S."/>
            <person name="Norbertczak H."/>
            <person name="Ormond D."/>
            <person name="Price C."/>
            <person name="Quail M.A."/>
            <person name="Sanders M."/>
            <person name="Walker D."/>
            <person name="Whitehead S."/>
            <person name="Salmond G.P.C."/>
            <person name="Birch P.R.J."/>
            <person name="Parkhill J."/>
            <person name="Toth I.K."/>
        </authorList>
    </citation>
    <scope>NUCLEOTIDE SEQUENCE [LARGE SCALE GENOMIC DNA]</scope>
    <source>
        <strain>SCRI 1043 / ATCC BAA-672</strain>
    </source>
</reference>
<feature type="chain" id="PRO_0000226177" description="Ketol-acid reductoisomerase (NADP(+))">
    <location>
        <begin position="1"/>
        <end position="492"/>
    </location>
</feature>
<feature type="domain" description="KARI N-terminal Rossmann" evidence="2">
    <location>
        <begin position="14"/>
        <end position="208"/>
    </location>
</feature>
<feature type="domain" description="KARI C-terminal knotted 1" evidence="3">
    <location>
        <begin position="209"/>
        <end position="344"/>
    </location>
</feature>
<feature type="domain" description="KARI C-terminal knotted 2" evidence="3">
    <location>
        <begin position="345"/>
        <end position="485"/>
    </location>
</feature>
<feature type="active site" evidence="1">
    <location>
        <position position="132"/>
    </location>
</feature>
<feature type="binding site" evidence="1">
    <location>
        <begin position="45"/>
        <end position="48"/>
    </location>
    <ligand>
        <name>NADP(+)</name>
        <dbReference type="ChEBI" id="CHEBI:58349"/>
    </ligand>
</feature>
<feature type="binding site" evidence="1">
    <location>
        <position position="68"/>
    </location>
    <ligand>
        <name>NADP(+)</name>
        <dbReference type="ChEBI" id="CHEBI:58349"/>
    </ligand>
</feature>
<feature type="binding site" evidence="1">
    <location>
        <position position="76"/>
    </location>
    <ligand>
        <name>NADP(+)</name>
        <dbReference type="ChEBI" id="CHEBI:58349"/>
    </ligand>
</feature>
<feature type="binding site" evidence="1">
    <location>
        <position position="78"/>
    </location>
    <ligand>
        <name>NADP(+)</name>
        <dbReference type="ChEBI" id="CHEBI:58349"/>
    </ligand>
</feature>
<feature type="binding site" evidence="1">
    <location>
        <begin position="108"/>
        <end position="110"/>
    </location>
    <ligand>
        <name>NADP(+)</name>
        <dbReference type="ChEBI" id="CHEBI:58349"/>
    </ligand>
</feature>
<feature type="binding site" evidence="1">
    <location>
        <position position="158"/>
    </location>
    <ligand>
        <name>NADP(+)</name>
        <dbReference type="ChEBI" id="CHEBI:58349"/>
    </ligand>
</feature>
<feature type="binding site" evidence="1">
    <location>
        <position position="217"/>
    </location>
    <ligand>
        <name>Mg(2+)</name>
        <dbReference type="ChEBI" id="CHEBI:18420"/>
        <label>1</label>
    </ligand>
</feature>
<feature type="binding site" evidence="1">
    <location>
        <position position="217"/>
    </location>
    <ligand>
        <name>Mg(2+)</name>
        <dbReference type="ChEBI" id="CHEBI:18420"/>
        <label>2</label>
    </ligand>
</feature>
<feature type="binding site" evidence="1">
    <location>
        <position position="221"/>
    </location>
    <ligand>
        <name>Mg(2+)</name>
        <dbReference type="ChEBI" id="CHEBI:18420"/>
        <label>1</label>
    </ligand>
</feature>
<feature type="binding site" evidence="1">
    <location>
        <position position="389"/>
    </location>
    <ligand>
        <name>Mg(2+)</name>
        <dbReference type="ChEBI" id="CHEBI:18420"/>
        <label>2</label>
    </ligand>
</feature>
<feature type="binding site" evidence="1">
    <location>
        <position position="393"/>
    </location>
    <ligand>
        <name>Mg(2+)</name>
        <dbReference type="ChEBI" id="CHEBI:18420"/>
        <label>2</label>
    </ligand>
</feature>
<feature type="binding site" evidence="1">
    <location>
        <position position="414"/>
    </location>
    <ligand>
        <name>substrate</name>
    </ligand>
</feature>
<keyword id="KW-0028">Amino-acid biosynthesis</keyword>
<keyword id="KW-0100">Branched-chain amino acid biosynthesis</keyword>
<keyword id="KW-0460">Magnesium</keyword>
<keyword id="KW-0479">Metal-binding</keyword>
<keyword id="KW-0521">NADP</keyword>
<keyword id="KW-0560">Oxidoreductase</keyword>
<keyword id="KW-1185">Reference proteome</keyword>
<keyword id="KW-0677">Repeat</keyword>
<evidence type="ECO:0000255" key="1">
    <source>
        <dbReference type="HAMAP-Rule" id="MF_00435"/>
    </source>
</evidence>
<evidence type="ECO:0000255" key="2">
    <source>
        <dbReference type="PROSITE-ProRule" id="PRU01197"/>
    </source>
</evidence>
<evidence type="ECO:0000255" key="3">
    <source>
        <dbReference type="PROSITE-ProRule" id="PRU01198"/>
    </source>
</evidence>
<name>ILVC_PECAS</name>
<accession>Q6CZD1</accession>
<protein>
    <recommendedName>
        <fullName evidence="1">Ketol-acid reductoisomerase (NADP(+))</fullName>
        <shortName evidence="1">KARI</shortName>
        <ecNumber evidence="1">1.1.1.86</ecNumber>
    </recommendedName>
    <alternativeName>
        <fullName evidence="1">Acetohydroxy-acid isomeroreductase</fullName>
        <shortName evidence="1">AHIR</shortName>
    </alternativeName>
    <alternativeName>
        <fullName evidence="1">Alpha-keto-beta-hydroxylacyl reductoisomerase</fullName>
    </alternativeName>
    <alternativeName>
        <fullName evidence="1">Ketol-acid reductoisomerase type 2</fullName>
    </alternativeName>
    <alternativeName>
        <fullName evidence="1">Ketol-acid reductoisomerase type II</fullName>
    </alternativeName>
</protein>
<organism>
    <name type="scientific">Pectobacterium atrosepticum (strain SCRI 1043 / ATCC BAA-672)</name>
    <name type="common">Erwinia carotovora subsp. atroseptica</name>
    <dbReference type="NCBI Taxonomy" id="218491"/>
    <lineage>
        <taxon>Bacteria</taxon>
        <taxon>Pseudomonadati</taxon>
        <taxon>Pseudomonadota</taxon>
        <taxon>Gammaproteobacteria</taxon>
        <taxon>Enterobacterales</taxon>
        <taxon>Pectobacteriaceae</taxon>
        <taxon>Pectobacterium</taxon>
    </lineage>
</organism>
<sequence>MANYFNTLNLRQQLDQLGKCRFMGRDEFADEASYLKGKKVVIVGCGAQGLNQGLNMRDSGLDIAYALRAEAIAEKRASWRKATENGFTVGTYEDLIPQADLIVNLTPDKQHSAVVQAVQPLMKQGAALGYSHGFNIVEVGEQIRKDITVVMVAPKCPGTEVREEYKRGFGVPTLIAVHPENDPKGEGMAIAKAWAAATGGHRAGVLQSSFVAEVKSDLMGEQTILCGMLQAGSLLGFDKLVSEGTDPAYAEKLIQFGWETITEALKQGGITLMMDRLSNPAKLRAYALSEQLKGIMAPLFQKHMDDIISGEFSGGMMADWANDDVKLLTWREETGKTAFENAPQFDGKIAEQEYFDNGVLMVAMVKAGVELAFETMVSSGIIEESAYYESLHELPLIANTIARKRLYEMNVVISDTAEYGNYLFANAAVPLLKGAFMASLQPGDLGKAVAGTEVDNAQLRDVNEAIRNHPIETVGHTLRGYMKDMKRIAVAG</sequence>
<gene>
    <name evidence="1" type="primary">ilvC</name>
    <name type="ordered locus">ECA4221</name>
</gene>
<proteinExistence type="inferred from homology"/>
<dbReference type="EC" id="1.1.1.86" evidence="1"/>
<dbReference type="EMBL" id="BX950851">
    <property type="protein sequence ID" value="CAG77118.1"/>
    <property type="molecule type" value="Genomic_DNA"/>
</dbReference>
<dbReference type="RefSeq" id="WP_011095692.1">
    <property type="nucleotide sequence ID" value="NC_004547.2"/>
</dbReference>
<dbReference type="SMR" id="Q6CZD1"/>
<dbReference type="STRING" id="218491.ECA4221"/>
<dbReference type="GeneID" id="57210887"/>
<dbReference type="KEGG" id="eca:ECA4221"/>
<dbReference type="PATRIC" id="fig|218491.5.peg.4298"/>
<dbReference type="eggNOG" id="COG0059">
    <property type="taxonomic scope" value="Bacteria"/>
</dbReference>
<dbReference type="HOGENOM" id="CLU_551905_0_0_6"/>
<dbReference type="OrthoDB" id="9804088at2"/>
<dbReference type="UniPathway" id="UPA00047">
    <property type="reaction ID" value="UER00056"/>
</dbReference>
<dbReference type="UniPathway" id="UPA00049">
    <property type="reaction ID" value="UER00060"/>
</dbReference>
<dbReference type="Proteomes" id="UP000007966">
    <property type="component" value="Chromosome"/>
</dbReference>
<dbReference type="GO" id="GO:0005829">
    <property type="term" value="C:cytosol"/>
    <property type="evidence" value="ECO:0007669"/>
    <property type="project" value="TreeGrafter"/>
</dbReference>
<dbReference type="GO" id="GO:0004455">
    <property type="term" value="F:ketol-acid reductoisomerase activity"/>
    <property type="evidence" value="ECO:0007669"/>
    <property type="project" value="UniProtKB-UniRule"/>
</dbReference>
<dbReference type="GO" id="GO:0000287">
    <property type="term" value="F:magnesium ion binding"/>
    <property type="evidence" value="ECO:0007669"/>
    <property type="project" value="UniProtKB-UniRule"/>
</dbReference>
<dbReference type="GO" id="GO:0009097">
    <property type="term" value="P:isoleucine biosynthetic process"/>
    <property type="evidence" value="ECO:0007669"/>
    <property type="project" value="UniProtKB-UniRule"/>
</dbReference>
<dbReference type="GO" id="GO:0009099">
    <property type="term" value="P:L-valine biosynthetic process"/>
    <property type="evidence" value="ECO:0007669"/>
    <property type="project" value="UniProtKB-UniRule"/>
</dbReference>
<dbReference type="FunFam" id="1.10.1040.10:FF:000007">
    <property type="entry name" value="Ketol-acid reductoisomerase (NADP(+))"/>
    <property type="match status" value="1"/>
</dbReference>
<dbReference type="FunFam" id="3.40.50.720:FF:000043">
    <property type="entry name" value="Ketol-acid reductoisomerase (NADP(+))"/>
    <property type="match status" value="1"/>
</dbReference>
<dbReference type="Gene3D" id="1.10.1040.10">
    <property type="entry name" value="N-(1-d-carboxylethyl)-l-norvaline Dehydrogenase, domain 2"/>
    <property type="match status" value="1"/>
</dbReference>
<dbReference type="Gene3D" id="3.40.50.720">
    <property type="entry name" value="NAD(P)-binding Rossmann-like Domain"/>
    <property type="match status" value="1"/>
</dbReference>
<dbReference type="HAMAP" id="MF_00435">
    <property type="entry name" value="IlvC"/>
    <property type="match status" value="1"/>
</dbReference>
<dbReference type="InterPro" id="IPR008927">
    <property type="entry name" value="6-PGluconate_DH-like_C_sf"/>
</dbReference>
<dbReference type="InterPro" id="IPR013328">
    <property type="entry name" value="6PGD_dom2"/>
</dbReference>
<dbReference type="InterPro" id="IPR013023">
    <property type="entry name" value="KARI"/>
</dbReference>
<dbReference type="InterPro" id="IPR000506">
    <property type="entry name" value="KARI_C"/>
</dbReference>
<dbReference type="InterPro" id="IPR013116">
    <property type="entry name" value="KARI_N"/>
</dbReference>
<dbReference type="InterPro" id="IPR036291">
    <property type="entry name" value="NAD(P)-bd_dom_sf"/>
</dbReference>
<dbReference type="NCBIfam" id="TIGR00465">
    <property type="entry name" value="ilvC"/>
    <property type="match status" value="1"/>
</dbReference>
<dbReference type="NCBIfam" id="NF003557">
    <property type="entry name" value="PRK05225.1"/>
    <property type="match status" value="1"/>
</dbReference>
<dbReference type="PANTHER" id="PTHR21371">
    <property type="entry name" value="KETOL-ACID REDUCTOISOMERASE, MITOCHONDRIAL"/>
    <property type="match status" value="1"/>
</dbReference>
<dbReference type="PANTHER" id="PTHR21371:SF1">
    <property type="entry name" value="KETOL-ACID REDUCTOISOMERASE, MITOCHONDRIAL"/>
    <property type="match status" value="1"/>
</dbReference>
<dbReference type="Pfam" id="PF01450">
    <property type="entry name" value="KARI_C"/>
    <property type="match status" value="2"/>
</dbReference>
<dbReference type="Pfam" id="PF07991">
    <property type="entry name" value="KARI_N"/>
    <property type="match status" value="1"/>
</dbReference>
<dbReference type="SUPFAM" id="SSF48179">
    <property type="entry name" value="6-phosphogluconate dehydrogenase C-terminal domain-like"/>
    <property type="match status" value="2"/>
</dbReference>
<dbReference type="SUPFAM" id="SSF51735">
    <property type="entry name" value="NAD(P)-binding Rossmann-fold domains"/>
    <property type="match status" value="1"/>
</dbReference>
<dbReference type="PROSITE" id="PS51851">
    <property type="entry name" value="KARI_C"/>
    <property type="match status" value="2"/>
</dbReference>
<dbReference type="PROSITE" id="PS51850">
    <property type="entry name" value="KARI_N"/>
    <property type="match status" value="1"/>
</dbReference>
<comment type="function">
    <text evidence="1">Involved in the biosynthesis of branched-chain amino acids (BCAA). Catalyzes an alkyl-migration followed by a ketol-acid reduction of (S)-2-acetolactate (S2AL) to yield (R)-2,3-dihydroxy-isovalerate. In the isomerase reaction, S2AL is rearranged via a Mg-dependent methyl migration to produce 3-hydroxy-3-methyl-2-ketobutyrate (HMKB). In the reductase reaction, this 2-ketoacid undergoes a metal-dependent reduction by NADPH to yield (R)-2,3-dihydroxy-isovalerate.</text>
</comment>
<comment type="catalytic activity">
    <reaction evidence="1">
        <text>(2R)-2,3-dihydroxy-3-methylbutanoate + NADP(+) = (2S)-2-acetolactate + NADPH + H(+)</text>
        <dbReference type="Rhea" id="RHEA:22068"/>
        <dbReference type="ChEBI" id="CHEBI:15378"/>
        <dbReference type="ChEBI" id="CHEBI:49072"/>
        <dbReference type="ChEBI" id="CHEBI:57783"/>
        <dbReference type="ChEBI" id="CHEBI:58349"/>
        <dbReference type="ChEBI" id="CHEBI:58476"/>
        <dbReference type="EC" id="1.1.1.86"/>
    </reaction>
</comment>
<comment type="catalytic activity">
    <reaction evidence="1">
        <text>(2R,3R)-2,3-dihydroxy-3-methylpentanoate + NADP(+) = (S)-2-ethyl-2-hydroxy-3-oxobutanoate + NADPH + H(+)</text>
        <dbReference type="Rhea" id="RHEA:13493"/>
        <dbReference type="ChEBI" id="CHEBI:15378"/>
        <dbReference type="ChEBI" id="CHEBI:49256"/>
        <dbReference type="ChEBI" id="CHEBI:49258"/>
        <dbReference type="ChEBI" id="CHEBI:57783"/>
        <dbReference type="ChEBI" id="CHEBI:58349"/>
        <dbReference type="EC" id="1.1.1.86"/>
    </reaction>
</comment>
<comment type="cofactor">
    <cofactor evidence="1">
        <name>Mg(2+)</name>
        <dbReference type="ChEBI" id="CHEBI:18420"/>
    </cofactor>
    <text evidence="1">Binds 2 magnesium ions per subunit.</text>
</comment>
<comment type="pathway">
    <text evidence="1">Amino-acid biosynthesis; L-isoleucine biosynthesis; L-isoleucine from 2-oxobutanoate: step 2/4.</text>
</comment>
<comment type="pathway">
    <text evidence="1">Amino-acid biosynthesis; L-valine biosynthesis; L-valine from pyruvate: step 2/4.</text>
</comment>
<comment type="similarity">
    <text evidence="1">Belongs to the ketol-acid reductoisomerase family.</text>
</comment>